<evidence type="ECO:0000255" key="1">
    <source>
        <dbReference type="HAMAP-Rule" id="MF_00259"/>
    </source>
</evidence>
<gene>
    <name evidence="1" type="primary">gcvT</name>
    <name type="ordered locus">Shewmr4_3331</name>
</gene>
<feature type="chain" id="PRO_1000047705" description="Aminomethyltransferase">
    <location>
        <begin position="1"/>
        <end position="364"/>
    </location>
</feature>
<name>GCST_SHESM</name>
<proteinExistence type="inferred from homology"/>
<keyword id="KW-0032">Aminotransferase</keyword>
<keyword id="KW-0808">Transferase</keyword>
<reference key="1">
    <citation type="submission" date="2006-08" db="EMBL/GenBank/DDBJ databases">
        <title>Complete sequence of Shewanella sp. MR-4.</title>
        <authorList>
            <consortium name="US DOE Joint Genome Institute"/>
            <person name="Copeland A."/>
            <person name="Lucas S."/>
            <person name="Lapidus A."/>
            <person name="Barry K."/>
            <person name="Detter J.C."/>
            <person name="Glavina del Rio T."/>
            <person name="Hammon N."/>
            <person name="Israni S."/>
            <person name="Dalin E."/>
            <person name="Tice H."/>
            <person name="Pitluck S."/>
            <person name="Kiss H."/>
            <person name="Brettin T."/>
            <person name="Bruce D."/>
            <person name="Han C."/>
            <person name="Tapia R."/>
            <person name="Gilna P."/>
            <person name="Schmutz J."/>
            <person name="Larimer F."/>
            <person name="Land M."/>
            <person name="Hauser L."/>
            <person name="Kyrpides N."/>
            <person name="Mikhailova N."/>
            <person name="Nealson K."/>
            <person name="Konstantinidis K."/>
            <person name="Klappenbach J."/>
            <person name="Tiedje J."/>
            <person name="Richardson P."/>
        </authorList>
    </citation>
    <scope>NUCLEOTIDE SEQUENCE [LARGE SCALE GENOMIC DNA]</scope>
    <source>
        <strain>MR-4</strain>
    </source>
</reference>
<sequence length="364" mass="39665">MANKTVLFNKHLESNAKMVDFHGWDMPLNYGSQIEEHHAVRQDAGMFDVSHMTVVDVTGTDACAFLRKLLANDVAKLKVPGKALYGGMLDDNAGIIDDLITYYLTDTFYRVVVNSATREKDLAWIAKQSQGFDVTVTERPELAMIAVQGPNAKAKAAAVFSSDQNAAIEGMKPFFGKQAGSLFIATTGYTGEVGYEIIVPETEAEALWQALLDQGVKPCGLGARDTLRLEAGMNLYGLDMDETINPLAANMGWTIAWEPTDRDFIGRKALEALRDAGTDKLVGLVMEEKGVLRHDMPVFFTDAAGVEQQGVITSGTFSPTLGYSIAMARVPNSIGDTAEVEMRKKRVAVRVVAPNFVRNGKQAF</sequence>
<protein>
    <recommendedName>
        <fullName evidence="1">Aminomethyltransferase</fullName>
        <ecNumber evidence="1">2.1.2.10</ecNumber>
    </recommendedName>
    <alternativeName>
        <fullName evidence="1">Glycine cleavage system T protein</fullName>
    </alternativeName>
</protein>
<organism>
    <name type="scientific">Shewanella sp. (strain MR-4)</name>
    <dbReference type="NCBI Taxonomy" id="60480"/>
    <lineage>
        <taxon>Bacteria</taxon>
        <taxon>Pseudomonadati</taxon>
        <taxon>Pseudomonadota</taxon>
        <taxon>Gammaproteobacteria</taxon>
        <taxon>Alteromonadales</taxon>
        <taxon>Shewanellaceae</taxon>
        <taxon>Shewanella</taxon>
    </lineage>
</organism>
<comment type="function">
    <text evidence="1">The glycine cleavage system catalyzes the degradation of glycine.</text>
</comment>
<comment type="catalytic activity">
    <reaction evidence="1">
        <text>N(6)-[(R)-S(8)-aminomethyldihydrolipoyl]-L-lysyl-[protein] + (6S)-5,6,7,8-tetrahydrofolate = N(6)-[(R)-dihydrolipoyl]-L-lysyl-[protein] + (6R)-5,10-methylene-5,6,7,8-tetrahydrofolate + NH4(+)</text>
        <dbReference type="Rhea" id="RHEA:16945"/>
        <dbReference type="Rhea" id="RHEA-COMP:10475"/>
        <dbReference type="Rhea" id="RHEA-COMP:10492"/>
        <dbReference type="ChEBI" id="CHEBI:15636"/>
        <dbReference type="ChEBI" id="CHEBI:28938"/>
        <dbReference type="ChEBI" id="CHEBI:57453"/>
        <dbReference type="ChEBI" id="CHEBI:83100"/>
        <dbReference type="ChEBI" id="CHEBI:83143"/>
        <dbReference type="EC" id="2.1.2.10"/>
    </reaction>
</comment>
<comment type="subunit">
    <text evidence="1">The glycine cleavage system is composed of four proteins: P, T, L and H.</text>
</comment>
<comment type="similarity">
    <text evidence="1">Belongs to the GcvT family.</text>
</comment>
<accession>Q0HEX0</accession>
<dbReference type="EC" id="2.1.2.10" evidence="1"/>
<dbReference type="EMBL" id="CP000446">
    <property type="protein sequence ID" value="ABI40397.1"/>
    <property type="molecule type" value="Genomic_DNA"/>
</dbReference>
<dbReference type="RefSeq" id="WP_011624064.1">
    <property type="nucleotide sequence ID" value="NC_008321.1"/>
</dbReference>
<dbReference type="SMR" id="Q0HEX0"/>
<dbReference type="KEGG" id="she:Shewmr4_3331"/>
<dbReference type="HOGENOM" id="CLU_007884_10_2_6"/>
<dbReference type="GO" id="GO:0005829">
    <property type="term" value="C:cytosol"/>
    <property type="evidence" value="ECO:0007669"/>
    <property type="project" value="TreeGrafter"/>
</dbReference>
<dbReference type="GO" id="GO:0005960">
    <property type="term" value="C:glycine cleavage complex"/>
    <property type="evidence" value="ECO:0007669"/>
    <property type="project" value="InterPro"/>
</dbReference>
<dbReference type="GO" id="GO:0004047">
    <property type="term" value="F:aminomethyltransferase activity"/>
    <property type="evidence" value="ECO:0007669"/>
    <property type="project" value="UniProtKB-UniRule"/>
</dbReference>
<dbReference type="GO" id="GO:0008483">
    <property type="term" value="F:transaminase activity"/>
    <property type="evidence" value="ECO:0007669"/>
    <property type="project" value="UniProtKB-KW"/>
</dbReference>
<dbReference type="GO" id="GO:0019464">
    <property type="term" value="P:glycine decarboxylation via glycine cleavage system"/>
    <property type="evidence" value="ECO:0007669"/>
    <property type="project" value="UniProtKB-UniRule"/>
</dbReference>
<dbReference type="FunFam" id="2.40.30.110:FF:000001">
    <property type="entry name" value="Aminomethyltransferase"/>
    <property type="match status" value="1"/>
</dbReference>
<dbReference type="FunFam" id="3.30.70.1400:FF:000001">
    <property type="entry name" value="Aminomethyltransferase"/>
    <property type="match status" value="1"/>
</dbReference>
<dbReference type="FunFam" id="4.10.1250.10:FF:000001">
    <property type="entry name" value="Aminomethyltransferase"/>
    <property type="match status" value="1"/>
</dbReference>
<dbReference type="Gene3D" id="2.40.30.110">
    <property type="entry name" value="Aminomethyltransferase beta-barrel domains"/>
    <property type="match status" value="1"/>
</dbReference>
<dbReference type="Gene3D" id="3.30.70.1400">
    <property type="entry name" value="Aminomethyltransferase beta-barrel domains"/>
    <property type="match status" value="1"/>
</dbReference>
<dbReference type="Gene3D" id="4.10.1250.10">
    <property type="entry name" value="Aminomethyltransferase fragment"/>
    <property type="match status" value="1"/>
</dbReference>
<dbReference type="Gene3D" id="3.30.1360.120">
    <property type="entry name" value="Probable tRNA modification gtpase trme, domain 1"/>
    <property type="match status" value="1"/>
</dbReference>
<dbReference type="HAMAP" id="MF_00259">
    <property type="entry name" value="GcvT"/>
    <property type="match status" value="1"/>
</dbReference>
<dbReference type="InterPro" id="IPR006223">
    <property type="entry name" value="GCS_T"/>
</dbReference>
<dbReference type="InterPro" id="IPR022903">
    <property type="entry name" value="GCS_T_bac"/>
</dbReference>
<dbReference type="InterPro" id="IPR013977">
    <property type="entry name" value="GCST_C"/>
</dbReference>
<dbReference type="InterPro" id="IPR006222">
    <property type="entry name" value="GCV_T_N"/>
</dbReference>
<dbReference type="InterPro" id="IPR028896">
    <property type="entry name" value="GcvT/YgfZ/DmdA"/>
</dbReference>
<dbReference type="InterPro" id="IPR029043">
    <property type="entry name" value="GcvT/YgfZ_C"/>
</dbReference>
<dbReference type="InterPro" id="IPR027266">
    <property type="entry name" value="TrmE/GcvT_dom1"/>
</dbReference>
<dbReference type="NCBIfam" id="TIGR00528">
    <property type="entry name" value="gcvT"/>
    <property type="match status" value="1"/>
</dbReference>
<dbReference type="NCBIfam" id="NF001567">
    <property type="entry name" value="PRK00389.1"/>
    <property type="match status" value="1"/>
</dbReference>
<dbReference type="PANTHER" id="PTHR43757">
    <property type="entry name" value="AMINOMETHYLTRANSFERASE"/>
    <property type="match status" value="1"/>
</dbReference>
<dbReference type="PANTHER" id="PTHR43757:SF2">
    <property type="entry name" value="AMINOMETHYLTRANSFERASE, MITOCHONDRIAL"/>
    <property type="match status" value="1"/>
</dbReference>
<dbReference type="Pfam" id="PF01571">
    <property type="entry name" value="GCV_T"/>
    <property type="match status" value="1"/>
</dbReference>
<dbReference type="Pfam" id="PF08669">
    <property type="entry name" value="GCV_T_C"/>
    <property type="match status" value="1"/>
</dbReference>
<dbReference type="PIRSF" id="PIRSF006487">
    <property type="entry name" value="GcvT"/>
    <property type="match status" value="1"/>
</dbReference>
<dbReference type="SUPFAM" id="SSF101790">
    <property type="entry name" value="Aminomethyltransferase beta-barrel domain"/>
    <property type="match status" value="1"/>
</dbReference>
<dbReference type="SUPFAM" id="SSF103025">
    <property type="entry name" value="Folate-binding domain"/>
    <property type="match status" value="1"/>
</dbReference>